<name>MATK_MELID</name>
<proteinExistence type="inferred from homology"/>
<comment type="function">
    <text evidence="1">Usually encoded in the trnK tRNA gene intron. Probably assists in splicing its own and other chloroplast group II introns.</text>
</comment>
<comment type="subcellular location">
    <subcellularLocation>
        <location>Plastid</location>
        <location>Chloroplast</location>
    </subcellularLocation>
</comment>
<comment type="similarity">
    <text evidence="1">Belongs to the intron maturase 2 family. MatK subfamily.</text>
</comment>
<organism>
    <name type="scientific">Melilotus indicus</name>
    <name type="common">Sourclover</name>
    <name type="synonym">Yellow sweet clover</name>
    <dbReference type="NCBI Taxonomy" id="200951"/>
    <lineage>
        <taxon>Eukaryota</taxon>
        <taxon>Viridiplantae</taxon>
        <taxon>Streptophyta</taxon>
        <taxon>Embryophyta</taxon>
        <taxon>Tracheophyta</taxon>
        <taxon>Spermatophyta</taxon>
        <taxon>Magnoliopsida</taxon>
        <taxon>eudicotyledons</taxon>
        <taxon>Gunneridae</taxon>
        <taxon>Pentapetalae</taxon>
        <taxon>rosids</taxon>
        <taxon>fabids</taxon>
        <taxon>Fabales</taxon>
        <taxon>Fabaceae</taxon>
        <taxon>Papilionoideae</taxon>
        <taxon>50 kb inversion clade</taxon>
        <taxon>NPAAA clade</taxon>
        <taxon>Hologalegina</taxon>
        <taxon>IRL clade</taxon>
        <taxon>Trifolieae</taxon>
        <taxon>Melilotus</taxon>
    </lineage>
</organism>
<sequence length="506" mass="60624">MKEYQVYLERARSRQQDFLYPLIFREYIYGLAYSQNFNRSIFVENLGYDNKYSLLIVKRLITRMYQQNHLIISANDSNKNPFLGYNKNFYSQIISEGFAIVVEIPFFLELSSSLEEPEIIKSYKNVRSIHSIFPFLEDKLTHLNYVSDIRIPYPIHLEILVQILRYWVKDAPFFHLLRLFLYNFCNWNSFITTKKSISTFSKSNPRLFLFLYHFYVCEYESIFLFLRNKSSHLRLKSFSVFFERIFFYAKREHLVEVFAKDFSYTLTFFKDPLIHYVRYQGKCILASKNAPFLMNKWKHYFIHLWQGFFDVWSQPRTININQLSEHSFQLLGYFLNVRLNRSVVRSQMLQNTFLIEIVSKKLDIIVPIIPLIRSLAKAKFCNVLGHPISKPVWADSSDFDIIDRFLRICRNLSHYYNGSSKKKSLYQIKYILRLSCIKTLACKHKSTVRAFLKRSGSEELLEAFFTEEEEILSLIFPRDSSTLHRLNRNRIWYLDILFSNDLVNDE</sequence>
<dbReference type="EMBL" id="AF522111">
    <property type="protein sequence ID" value="AAM82103.1"/>
    <property type="molecule type" value="Genomic_DNA"/>
</dbReference>
<dbReference type="EMBL" id="AY386882">
    <property type="protein sequence ID" value="AAQ91960.1"/>
    <property type="molecule type" value="Genomic_DNA"/>
</dbReference>
<dbReference type="GO" id="GO:0009507">
    <property type="term" value="C:chloroplast"/>
    <property type="evidence" value="ECO:0007669"/>
    <property type="project" value="UniProtKB-SubCell"/>
</dbReference>
<dbReference type="GO" id="GO:0003723">
    <property type="term" value="F:RNA binding"/>
    <property type="evidence" value="ECO:0007669"/>
    <property type="project" value="UniProtKB-KW"/>
</dbReference>
<dbReference type="GO" id="GO:0006397">
    <property type="term" value="P:mRNA processing"/>
    <property type="evidence" value="ECO:0007669"/>
    <property type="project" value="UniProtKB-KW"/>
</dbReference>
<dbReference type="GO" id="GO:0008380">
    <property type="term" value="P:RNA splicing"/>
    <property type="evidence" value="ECO:0007669"/>
    <property type="project" value="UniProtKB-UniRule"/>
</dbReference>
<dbReference type="GO" id="GO:0008033">
    <property type="term" value="P:tRNA processing"/>
    <property type="evidence" value="ECO:0007669"/>
    <property type="project" value="UniProtKB-KW"/>
</dbReference>
<dbReference type="HAMAP" id="MF_01390">
    <property type="entry name" value="MatK"/>
    <property type="match status" value="1"/>
</dbReference>
<dbReference type="InterPro" id="IPR024937">
    <property type="entry name" value="Domain_X"/>
</dbReference>
<dbReference type="InterPro" id="IPR002866">
    <property type="entry name" value="Maturase_MatK"/>
</dbReference>
<dbReference type="InterPro" id="IPR024942">
    <property type="entry name" value="Maturase_MatK_N"/>
</dbReference>
<dbReference type="PANTHER" id="PTHR34811">
    <property type="entry name" value="MATURASE K"/>
    <property type="match status" value="1"/>
</dbReference>
<dbReference type="PANTHER" id="PTHR34811:SF1">
    <property type="entry name" value="MATURASE K"/>
    <property type="match status" value="1"/>
</dbReference>
<dbReference type="Pfam" id="PF01348">
    <property type="entry name" value="Intron_maturas2"/>
    <property type="match status" value="1"/>
</dbReference>
<dbReference type="Pfam" id="PF01824">
    <property type="entry name" value="MatK_N"/>
    <property type="match status" value="1"/>
</dbReference>
<gene>
    <name evidence="1" type="primary">matK</name>
</gene>
<accession>Q8MCP4</accession>
<geneLocation type="chloroplast"/>
<evidence type="ECO:0000255" key="1">
    <source>
        <dbReference type="HAMAP-Rule" id="MF_01390"/>
    </source>
</evidence>
<protein>
    <recommendedName>
        <fullName evidence="1">Maturase K</fullName>
    </recommendedName>
    <alternativeName>
        <fullName evidence="1">Intron maturase</fullName>
    </alternativeName>
</protein>
<reference key="1">
    <citation type="book" date="2003" name="Advances in legume systematics - part 10">
        <title>Phylogenetic analyses of tribes Trifolieae and Vicieae based on sequences of the plastid gene matK (Papilionoideae: Leguminosae).</title>
        <editorList>
            <person name="Klitgaard B.B."/>
            <person name="Bruneau A."/>
        </editorList>
        <authorList>
            <person name="Steele K.P."/>
            <person name="Wojciechowski M.F."/>
        </authorList>
    </citation>
    <scope>NUCLEOTIDE SEQUENCE [GENOMIC DNA]</scope>
</reference>
<reference key="2">
    <citation type="journal article" date="2004" name="Am. J. Bot.">
        <title>A phylogeny of legumes (Leguminosae) based on analysis of the plastid matK gene resolves many well-supported subclades within the family.</title>
        <authorList>
            <person name="Wojciechowski M.F."/>
            <person name="Lavin M."/>
            <person name="Sanderson M.J."/>
        </authorList>
        <dbReference type="AGRICOLA" id="IND43661289"/>
    </citation>
    <scope>NUCLEOTIDE SEQUENCE [GENOMIC DNA]</scope>
</reference>
<keyword id="KW-0150">Chloroplast</keyword>
<keyword id="KW-0507">mRNA processing</keyword>
<keyword id="KW-0934">Plastid</keyword>
<keyword id="KW-0694">RNA-binding</keyword>
<keyword id="KW-0819">tRNA processing</keyword>
<feature type="chain" id="PRO_0000143515" description="Maturase K">
    <location>
        <begin position="1"/>
        <end position="506"/>
    </location>
</feature>